<keyword id="KW-0066">ATP synthesis</keyword>
<keyword id="KW-0997">Cell inner membrane</keyword>
<keyword id="KW-1003">Cell membrane</keyword>
<keyword id="KW-0139">CF(1)</keyword>
<keyword id="KW-0375">Hydrogen ion transport</keyword>
<keyword id="KW-0406">Ion transport</keyword>
<keyword id="KW-0472">Membrane</keyword>
<keyword id="KW-0813">Transport</keyword>
<comment type="function">
    <text evidence="1">F(1)F(0) ATP synthase produces ATP from ADP in the presence of a proton or sodium gradient. F-type ATPases consist of two structural domains, F(1) containing the extramembraneous catalytic core and F(0) containing the membrane proton channel, linked together by a central stalk and a peripheral stalk. During catalysis, ATP synthesis in the catalytic domain of F(1) is coupled via a rotary mechanism of the central stalk subunits to proton translocation.</text>
</comment>
<comment type="function">
    <text evidence="1">This protein is part of the stalk that links CF(0) to CF(1). It either transmits conformational changes from CF(0) to CF(1) or is implicated in proton conduction.</text>
</comment>
<comment type="subunit">
    <text evidence="1">F-type ATPases have 2 components, F(1) - the catalytic core - and F(0) - the membrane proton channel. F(1) has five subunits: alpha(3), beta(3), gamma(1), delta(1), epsilon(1). F(0) has three main subunits: a(1), b(2) and c(10-14). The alpha and beta chains form an alternating ring which encloses part of the gamma chain. F(1) is attached to F(0) by a central stalk formed by the gamma and epsilon chains, while a peripheral stalk is formed by the delta and b chains.</text>
</comment>
<comment type="subcellular location">
    <subcellularLocation>
        <location evidence="1">Cell inner membrane</location>
        <topology evidence="1">Peripheral membrane protein</topology>
    </subcellularLocation>
</comment>
<comment type="similarity">
    <text evidence="1">Belongs to the ATPase delta chain family.</text>
</comment>
<evidence type="ECO:0000255" key="1">
    <source>
        <dbReference type="HAMAP-Rule" id="MF_01416"/>
    </source>
</evidence>
<organism>
    <name type="scientific">Shewanella baltica (strain OS185)</name>
    <dbReference type="NCBI Taxonomy" id="402882"/>
    <lineage>
        <taxon>Bacteria</taxon>
        <taxon>Pseudomonadati</taxon>
        <taxon>Pseudomonadota</taxon>
        <taxon>Gammaproteobacteria</taxon>
        <taxon>Alteromonadales</taxon>
        <taxon>Shewanellaceae</taxon>
        <taxon>Shewanella</taxon>
    </lineage>
</organism>
<reference key="1">
    <citation type="submission" date="2007-07" db="EMBL/GenBank/DDBJ databases">
        <title>Complete sequence of chromosome of Shewanella baltica OS185.</title>
        <authorList>
            <consortium name="US DOE Joint Genome Institute"/>
            <person name="Copeland A."/>
            <person name="Lucas S."/>
            <person name="Lapidus A."/>
            <person name="Barry K."/>
            <person name="Glavina del Rio T."/>
            <person name="Dalin E."/>
            <person name="Tice H."/>
            <person name="Pitluck S."/>
            <person name="Sims D."/>
            <person name="Brettin T."/>
            <person name="Bruce D."/>
            <person name="Detter J.C."/>
            <person name="Han C."/>
            <person name="Schmutz J."/>
            <person name="Larimer F."/>
            <person name="Land M."/>
            <person name="Hauser L."/>
            <person name="Kyrpides N."/>
            <person name="Mikhailova N."/>
            <person name="Brettar I."/>
            <person name="Rodrigues J."/>
            <person name="Konstantinidis K."/>
            <person name="Tiedje J."/>
            <person name="Richardson P."/>
        </authorList>
    </citation>
    <scope>NUCLEOTIDE SEQUENCE [LARGE SCALE GENOMIC DNA]</scope>
    <source>
        <strain>OS185</strain>
    </source>
</reference>
<proteinExistence type="inferred from homology"/>
<protein>
    <recommendedName>
        <fullName evidence="1">ATP synthase subunit delta</fullName>
    </recommendedName>
    <alternativeName>
        <fullName evidence="1">ATP synthase F(1) sector subunit delta</fullName>
    </alternativeName>
    <alternativeName>
        <fullName evidence="1">F-type ATPase subunit delta</fullName>
        <shortName evidence="1">F-ATPase subunit delta</shortName>
    </alternativeName>
</protein>
<feature type="chain" id="PRO_0000371127" description="ATP synthase subunit delta">
    <location>
        <begin position="1"/>
        <end position="177"/>
    </location>
</feature>
<accession>A6WUJ3</accession>
<name>ATPD_SHEB8</name>
<sequence>MAELTTIARPYAKAAFDFAIEQDAVDSWAEMLTFAALVSENETMQPLLAGSLASTKLAALFISVCGEQVNVQGQNLIKVMAENGRLKVLPAVSQLFTEYRNEWAKEVEADVVSATELSSEQQQQISISLEKRLARKVKLNCSTDAALIAGVIIKTGDLVIDGSVRGKLSRLSDKLQS</sequence>
<gene>
    <name evidence="1" type="primary">atpH</name>
    <name type="ordered locus">Shew185_4368</name>
</gene>
<dbReference type="EMBL" id="CP000753">
    <property type="protein sequence ID" value="ABS10482.1"/>
    <property type="molecule type" value="Genomic_DNA"/>
</dbReference>
<dbReference type="RefSeq" id="WP_006083842.1">
    <property type="nucleotide sequence ID" value="NC_009665.1"/>
</dbReference>
<dbReference type="SMR" id="A6WUJ3"/>
<dbReference type="GeneID" id="11774463"/>
<dbReference type="KEGG" id="sbm:Shew185_4368"/>
<dbReference type="HOGENOM" id="CLU_085114_3_0_6"/>
<dbReference type="GO" id="GO:0005886">
    <property type="term" value="C:plasma membrane"/>
    <property type="evidence" value="ECO:0007669"/>
    <property type="project" value="UniProtKB-SubCell"/>
</dbReference>
<dbReference type="GO" id="GO:0045259">
    <property type="term" value="C:proton-transporting ATP synthase complex"/>
    <property type="evidence" value="ECO:0007669"/>
    <property type="project" value="UniProtKB-KW"/>
</dbReference>
<dbReference type="GO" id="GO:0046933">
    <property type="term" value="F:proton-transporting ATP synthase activity, rotational mechanism"/>
    <property type="evidence" value="ECO:0007669"/>
    <property type="project" value="UniProtKB-UniRule"/>
</dbReference>
<dbReference type="Gene3D" id="1.10.520.20">
    <property type="entry name" value="N-terminal domain of the delta subunit of the F1F0-ATP synthase"/>
    <property type="match status" value="1"/>
</dbReference>
<dbReference type="HAMAP" id="MF_01416">
    <property type="entry name" value="ATP_synth_delta_bact"/>
    <property type="match status" value="1"/>
</dbReference>
<dbReference type="InterPro" id="IPR026015">
    <property type="entry name" value="ATP_synth_OSCP/delta_N_sf"/>
</dbReference>
<dbReference type="InterPro" id="IPR020781">
    <property type="entry name" value="ATPase_OSCP/d_CS"/>
</dbReference>
<dbReference type="InterPro" id="IPR000711">
    <property type="entry name" value="ATPase_OSCP/dsu"/>
</dbReference>
<dbReference type="NCBIfam" id="TIGR01145">
    <property type="entry name" value="ATP_synt_delta"/>
    <property type="match status" value="1"/>
</dbReference>
<dbReference type="NCBIfam" id="NF004402">
    <property type="entry name" value="PRK05758.2-2"/>
    <property type="match status" value="1"/>
</dbReference>
<dbReference type="NCBIfam" id="NF004404">
    <property type="entry name" value="PRK05758.2-5"/>
    <property type="match status" value="1"/>
</dbReference>
<dbReference type="PANTHER" id="PTHR11910">
    <property type="entry name" value="ATP SYNTHASE DELTA CHAIN"/>
    <property type="match status" value="1"/>
</dbReference>
<dbReference type="Pfam" id="PF00213">
    <property type="entry name" value="OSCP"/>
    <property type="match status" value="1"/>
</dbReference>
<dbReference type="PRINTS" id="PR00125">
    <property type="entry name" value="ATPASEDELTA"/>
</dbReference>
<dbReference type="SUPFAM" id="SSF47928">
    <property type="entry name" value="N-terminal domain of the delta subunit of the F1F0-ATP synthase"/>
    <property type="match status" value="1"/>
</dbReference>
<dbReference type="PROSITE" id="PS00389">
    <property type="entry name" value="ATPASE_DELTA"/>
    <property type="match status" value="1"/>
</dbReference>